<name>FUS_HENDH</name>
<sequence>MATQEVRLKCLLCGIIVLVLSLEGLGILHYEKLSKIGLVKGITRKYKIKSNPLTKDIVIKMIPNVSNVSKCTGTVMENYKSRLTGILSPIKGAIELYNNNTHDLVGDVKLAGVVMAGIAIGIATAAQITAGVALYEAMKNADNINKLKSSIESTNEAVVKLQETAEKTVYVLTALQDYINTNLVPTIDQISCKQTELALDLALSKYLSDLLFVFGPNLQDPVSNSMTIQAISQAFGGNYETLLRTLGYATEDFDDLLESDSIAGQIVYVDLSSYYIIVRVYFPILTEIQQAYVQELLPVSFNNDNSEWISIVPNFVLIRNTLISNIEVKYCLITKKSVICNQDYATPMTASVRECLTGSTDKCPRELVVSSHVPRFALSGGVLFANCISVTCQCQTTGRAISQSGEQTLLMIDNTTCTTVVLGNIIISLGKYLGSINYNSESIAVGPPVYTDKVDISSQISSMNQSLQQSKDYIKEAQKILDTVNPSLISMLSMIILYVLSIAALCIGLITFISFVIVEKKRGNYSRLDDRQVRPVSNGDLYYIGT</sequence>
<protein>
    <recommendedName>
        <fullName>Fusion glycoprotein F0</fullName>
        <shortName>Protein F</shortName>
    </recommendedName>
    <component>
        <recommendedName>
            <fullName>Fusion glycoprotein F2</fullName>
        </recommendedName>
    </component>
    <component>
        <recommendedName>
            <fullName>Fusion glycoprotein F1</fullName>
        </recommendedName>
    </component>
</protein>
<comment type="function">
    <text evidence="3 5">Class I viral fusion protein. Under the current model, the protein has at least 3 conformational states: pre-fusion native state, pre-hairpin intermediate state, and post-fusion hairpin state. During viral and plasma cell membrane fusion, the heptad repeat (HR) regions assume a trimer-of-hairpins structure, positioning the fusion peptide in close proximity to the C-terminal region of the ectodomain. The formation of this structure appears to drive apposition and subsequent fusion of viral and plasma cell membranes. Directs fusion of viral and cellular membranes leading to delivery of the nucleocapsid into the cytoplasm. This fusion is pH independent and occurs directly at the outer cell membrane. The trimer of F1-F2 (F protein) probably interacts with G at the virion surface. Upon G binding to its cellular receptor, the hydrophobic fusion peptide is unmasked and interacts with the cellular membrane, inducing the fusion between cell and virion membranes. Later in infection, F proteins expressed at the plasma membrane of infected cells could mediate fusion with adjacent cells to form syncytia, a cytopathic effect that could lead to tissue necrosis (By similarity).</text>
</comment>
<comment type="subunit">
    <text evidence="1">Homotrimer of disulfide-linked F1-F2.</text>
</comment>
<comment type="subcellular location">
    <subcellularLocation>
        <location evidence="1">Virion membrane</location>
        <topology evidence="1">Single-pass type I membrane protein</topology>
    </subcellularLocation>
    <subcellularLocation>
        <location evidence="1">Host cell membrane</location>
        <topology evidence="1">Single-pass membrane protein</topology>
    </subcellularLocation>
</comment>
<comment type="PTM">
    <text evidence="1">The inactive precursor F0 is glycosylated and proteolytically cleaved into F1 and F2 to be functionally active. The cleavage is mediated by cellular proteases during the transport and maturation of the polypeptide (By similarity).</text>
</comment>
<comment type="similarity">
    <text evidence="6">Belongs to the paramyxoviruses fusion glycoprotein family.</text>
</comment>
<feature type="signal peptide" evidence="4">
    <location>
        <begin position="1"/>
        <end position="26"/>
    </location>
</feature>
<feature type="chain" id="PRO_0000236002" description="Fusion glycoprotein F0">
    <location>
        <begin position="27"/>
        <end position="546"/>
    </location>
</feature>
<feature type="chain" id="PRO_0000236003" description="Fusion glycoprotein F2" evidence="6">
    <location>
        <begin position="27"/>
        <end position="109"/>
    </location>
</feature>
<feature type="chain" id="PRO_0000236004" description="Fusion glycoprotein F1" evidence="6">
    <location>
        <begin position="110"/>
        <end position="546"/>
    </location>
</feature>
<feature type="topological domain" description="Extracellular" evidence="4">
    <location>
        <begin position="27"/>
        <end position="494"/>
    </location>
</feature>
<feature type="transmembrane region" description="Helical" evidence="4">
    <location>
        <begin position="495"/>
        <end position="515"/>
    </location>
</feature>
<feature type="topological domain" description="Cytoplasmic" evidence="4">
    <location>
        <begin position="516"/>
        <end position="546"/>
    </location>
</feature>
<feature type="region of interest" description="Fusion peptide" evidence="1">
    <location>
        <begin position="110"/>
        <end position="134"/>
    </location>
</feature>
<feature type="coiled-coil region" evidence="4">
    <location>
        <begin position="135"/>
        <end position="163"/>
    </location>
</feature>
<feature type="coiled-coil region" evidence="4">
    <location>
        <begin position="459"/>
        <end position="484"/>
    </location>
</feature>
<feature type="site" description="Cleavage; by host" evidence="6">
    <location>
        <begin position="109"/>
        <end position="110"/>
    </location>
</feature>
<feature type="glycosylation site" description="N-linked (GlcNAc...) asparagine; by host" evidence="2">
    <location>
        <position position="64"/>
    </location>
</feature>
<feature type="glycosylation site" description="N-linked (GlcNAc...) asparagine; by host" evidence="7">
    <location>
        <position position="67"/>
    </location>
</feature>
<feature type="glycosylation site" description="N-linked (GlcNAc...) asparagine; by host" evidence="7">
    <location>
        <position position="99"/>
    </location>
</feature>
<feature type="glycosylation site" description="N-linked (GlcNAc...) asparagine; by host" evidence="7">
    <location>
        <position position="414"/>
    </location>
</feature>
<feature type="glycosylation site" description="N-linked (GlcNAc...) asparagine; by host" evidence="7">
    <location>
        <position position="464"/>
    </location>
</feature>
<feature type="disulfide bond" description="Interchain (with C-195)" evidence="2">
    <location>
        <position position="71"/>
    </location>
</feature>
<feature type="disulfide bond" description="Interchain (with C-68)" evidence="2">
    <location>
        <position position="192"/>
    </location>
</feature>
<feature type="disulfide bond" evidence="2">
    <location>
        <begin position="331"/>
        <end position="340"/>
    </location>
</feature>
<feature type="disulfide bond" evidence="2">
    <location>
        <begin position="355"/>
        <end position="363"/>
    </location>
</feature>
<feature type="disulfide bond" evidence="2">
    <location>
        <begin position="387"/>
        <end position="392"/>
    </location>
</feature>
<feature type="disulfide bond" evidence="2">
    <location>
        <begin position="394"/>
        <end position="417"/>
    </location>
</feature>
<feature type="sequence conflict" description="In Ref. 1; AAB39505." evidence="6" ref="1">
    <original>SDLLFV</original>
    <variation>LICSC</variation>
    <location>
        <begin position="208"/>
        <end position="213"/>
    </location>
</feature>
<feature type="sequence conflict" description="In Ref. 1; AAB39505." evidence="6" ref="1">
    <original>A</original>
    <variation>T</variation>
    <location>
        <position position="263"/>
    </location>
</feature>
<feature type="sequence conflict" description="In Ref. 1; AAB39505." evidence="6" ref="1">
    <original>G</original>
    <variation>R</variation>
    <location>
        <position position="405"/>
    </location>
</feature>
<feature type="sequence conflict" description="In Ref. 1; AAB39505." evidence="6" ref="1">
    <original>G</original>
    <variation>P</variation>
    <location>
        <position position="430"/>
    </location>
</feature>
<feature type="sequence conflict" description="In Ref. 1; AAB39505." evidence="6" ref="1">
    <original>NYNSESIAVGPPVYTD</original>
    <variation>KLQVLRALLLGHQSIQT</variation>
    <location>
        <begin position="437"/>
        <end position="452"/>
    </location>
</feature>
<feature type="helix" evidence="10">
    <location>
        <begin position="30"/>
        <end position="34"/>
    </location>
</feature>
<feature type="turn" evidence="10">
    <location>
        <begin position="35"/>
        <end position="37"/>
    </location>
</feature>
<feature type="strand" evidence="10">
    <location>
        <begin position="38"/>
        <end position="62"/>
    </location>
</feature>
<feature type="helix" evidence="10">
    <location>
        <begin position="66"/>
        <end position="71"/>
    </location>
</feature>
<feature type="helix" evidence="10">
    <location>
        <begin position="75"/>
        <end position="98"/>
    </location>
</feature>
<feature type="strand" evidence="9">
    <location>
        <begin position="104"/>
        <end position="107"/>
    </location>
</feature>
<feature type="helix" evidence="9">
    <location>
        <begin position="109"/>
        <end position="111"/>
    </location>
</feature>
<feature type="strand" evidence="10">
    <location>
        <begin position="114"/>
        <end position="116"/>
    </location>
</feature>
<feature type="helix" evidence="10">
    <location>
        <begin position="117"/>
        <end position="120"/>
    </location>
</feature>
<feature type="strand" evidence="10">
    <location>
        <begin position="122"/>
        <end position="124"/>
    </location>
</feature>
<feature type="helix" evidence="8">
    <location>
        <begin position="144"/>
        <end position="174"/>
    </location>
</feature>
<feature type="helix" evidence="10">
    <location>
        <begin position="176"/>
        <end position="182"/>
    </location>
</feature>
<feature type="helix" evidence="10">
    <location>
        <begin position="184"/>
        <end position="186"/>
    </location>
</feature>
<feature type="turn" evidence="10">
    <location>
        <begin position="187"/>
        <end position="189"/>
    </location>
</feature>
<feature type="helix" evidence="8">
    <location>
        <begin position="190"/>
        <end position="205"/>
    </location>
</feature>
<feature type="helix" evidence="10">
    <location>
        <begin position="228"/>
        <end position="231"/>
    </location>
</feature>
<feature type="helix" evidence="10">
    <location>
        <begin position="232"/>
        <end position="235"/>
    </location>
</feature>
<feature type="helix" evidence="10">
    <location>
        <begin position="239"/>
        <end position="245"/>
    </location>
</feature>
<feature type="helix" evidence="10">
    <location>
        <begin position="253"/>
        <end position="258"/>
    </location>
</feature>
<feature type="strand" evidence="10">
    <location>
        <begin position="263"/>
        <end position="270"/>
    </location>
</feature>
<feature type="turn" evidence="10">
    <location>
        <begin position="271"/>
        <end position="274"/>
    </location>
</feature>
<feature type="strand" evidence="10">
    <location>
        <begin position="275"/>
        <end position="298"/>
    </location>
</feature>
<feature type="strand" evidence="10">
    <location>
        <begin position="301"/>
        <end position="310"/>
    </location>
</feature>
<feature type="strand" evidence="10">
    <location>
        <begin position="314"/>
        <end position="319"/>
    </location>
</feature>
<feature type="strand" evidence="10">
    <location>
        <begin position="322"/>
        <end position="326"/>
    </location>
</feature>
<feature type="helix" evidence="10">
    <location>
        <begin position="328"/>
        <end position="330"/>
    </location>
</feature>
<feature type="strand" evidence="10">
    <location>
        <begin position="331"/>
        <end position="333"/>
    </location>
</feature>
<feature type="strand" evidence="10">
    <location>
        <begin position="335"/>
        <end position="342"/>
    </location>
</feature>
<feature type="helix" evidence="10">
    <location>
        <begin position="350"/>
        <end position="356"/>
    </location>
</feature>
<feature type="helix" evidence="10">
    <location>
        <begin position="360"/>
        <end position="362"/>
    </location>
</feature>
<feature type="strand" evidence="10">
    <location>
        <begin position="365"/>
        <end position="367"/>
    </location>
</feature>
<feature type="strand" evidence="10">
    <location>
        <begin position="376"/>
        <end position="379"/>
    </location>
</feature>
<feature type="strand" evidence="10">
    <location>
        <begin position="382"/>
        <end position="385"/>
    </location>
</feature>
<feature type="turn" evidence="10">
    <location>
        <begin position="387"/>
        <end position="389"/>
    </location>
</feature>
<feature type="strand" evidence="10">
    <location>
        <begin position="392"/>
        <end position="394"/>
    </location>
</feature>
<feature type="turn" evidence="10">
    <location>
        <begin position="395"/>
        <end position="397"/>
    </location>
</feature>
<feature type="strand" evidence="9">
    <location>
        <begin position="399"/>
        <end position="401"/>
    </location>
</feature>
<feature type="strand" evidence="10">
    <location>
        <begin position="410"/>
        <end position="412"/>
    </location>
</feature>
<feature type="turn" evidence="10">
    <location>
        <begin position="414"/>
        <end position="416"/>
    </location>
</feature>
<feature type="strand" evidence="10">
    <location>
        <begin position="418"/>
        <end position="422"/>
    </location>
</feature>
<feature type="strand" evidence="10">
    <location>
        <begin position="425"/>
        <end position="428"/>
    </location>
</feature>
<feature type="helix" evidence="10">
    <location>
        <begin position="438"/>
        <end position="440"/>
    </location>
</feature>
<feature type="helix" evidence="10">
    <location>
        <begin position="453"/>
        <end position="470"/>
    </location>
</feature>
<feature type="turn" evidence="9">
    <location>
        <begin position="480"/>
        <end position="482"/>
    </location>
</feature>
<feature type="helix" evidence="9">
    <location>
        <begin position="483"/>
        <end position="490"/>
    </location>
</feature>
<organism>
    <name type="scientific">Hendra virus (isolate Horse/Autralia/Hendra/1994)</name>
    <dbReference type="NCBI Taxonomy" id="928303"/>
    <lineage>
        <taxon>Viruses</taxon>
        <taxon>Riboviria</taxon>
        <taxon>Orthornavirae</taxon>
        <taxon>Negarnaviricota</taxon>
        <taxon>Haploviricotina</taxon>
        <taxon>Monjiviricetes</taxon>
        <taxon>Mononegavirales</taxon>
        <taxon>Paramyxoviridae</taxon>
        <taxon>Orthoparamyxovirinae</taxon>
        <taxon>Henipavirus</taxon>
        <taxon>Henipavirus hendraense</taxon>
    </lineage>
</organism>
<gene>
    <name type="primary">F</name>
</gene>
<proteinExistence type="evidence at protein level"/>
<accession>O89342</accession>
<accession>Q66761</accession>
<reference key="1">
    <citation type="journal article" date="1996" name="Virus Res.">
        <title>Comparison of the deduced matrix and fusion protein sequences of equine morbillivirus with cognate genes of the Paramyxoviridae.</title>
        <authorList>
            <person name="Gould A.R."/>
        </authorList>
    </citation>
    <scope>NUCLEOTIDE SEQUENCE [GENOMIC RNA]</scope>
</reference>
<reference key="2">
    <citation type="journal article" date="2000" name="J. Virol.">
        <title>The exceptionally large genome of Hendra virus: support for creation of a new genus within the family Paramyxoviridae.</title>
        <authorList>
            <person name="Wang L.-F."/>
            <person name="Yu M."/>
            <person name="Hansson E."/>
            <person name="Pritchard L.I."/>
            <person name="Shiell B."/>
            <person name="Michalski W.P."/>
            <person name="Eaton B.T."/>
        </authorList>
    </citation>
    <scope>NUCLEOTIDE SEQUENCE [GENOMIC RNA]</scope>
</reference>
<reference key="3">
    <citation type="journal article" date="2017" name="J. Virol.">
        <title>Mutations in the Transmembrane Domain and Cytoplasmic Tail of Hendra Virus Fusion Protein Disrupt Virus-Like-Particle Assembly.</title>
        <authorList>
            <person name="Cifuentes-Munoz N."/>
            <person name="Sun W."/>
            <person name="Ray G."/>
            <person name="Schmitt P.T."/>
            <person name="Webb S."/>
            <person name="Gibson K."/>
            <person name="Dutch R.E."/>
            <person name="Schmitt A.P."/>
        </authorList>
    </citation>
    <scope>FUNCTION</scope>
</reference>
<reference key="4">
    <citation type="journal article" date="2006" name="FEBS J.">
        <title>Crystal structures of Nipah and Hendra virus fusion core proteins.</title>
        <authorList>
            <person name="Lou Z."/>
            <person name="Xu Y."/>
            <person name="Xiang K."/>
            <person name="Su N."/>
            <person name="Qin L."/>
            <person name="Li X."/>
            <person name="Gao G.F."/>
            <person name="Bartlam M."/>
            <person name="Rao Z."/>
        </authorList>
    </citation>
    <scope>X-RAY CRYSTALLOGRAPHY (2.20 ANGSTROMS) OF 137-178 AND 187-205</scope>
</reference>
<reference key="5">
    <citation type="journal article" date="2016" name="Proc. Natl. Acad. Sci. U.S.A.">
        <title>Structure and stabilization of the Hendra virus F glycoprotein in its prefusion form.</title>
        <authorList>
            <person name="Wong J.J."/>
            <person name="Paterson R.G."/>
            <person name="Lamb R.A."/>
            <person name="Jardetzky T.S."/>
        </authorList>
    </citation>
    <scope>X-RAY CRYSTALLOGRAPHY (3.20 ANGSTROMS) OF 26-495</scope>
    <scope>GLYCOSYLATION AT ASN-67; ASN-99; ASN-414 AND ASN-464</scope>
</reference>
<dbReference type="EMBL" id="U49404">
    <property type="protein sequence ID" value="AAB39505.1"/>
    <property type="molecule type" value="Genomic_RNA"/>
</dbReference>
<dbReference type="EMBL" id="AF017149">
    <property type="protein sequence ID" value="AAC83192.2"/>
    <property type="molecule type" value="Genomic_RNA"/>
</dbReference>
<dbReference type="PIR" id="T08210">
    <property type="entry name" value="T08210"/>
</dbReference>
<dbReference type="PDB" id="1WP8">
    <property type="method" value="X-ray"/>
    <property type="resolution" value="2.20 A"/>
    <property type="chains" value="A/B/C=137-178, A/B/C=453-485"/>
</dbReference>
<dbReference type="PDB" id="5EJB">
    <property type="method" value="X-ray"/>
    <property type="resolution" value="3.20 A"/>
    <property type="chains" value="A/B/C/D/E/F=26-482"/>
</dbReference>
<dbReference type="PDB" id="6ILF">
    <property type="method" value="X-ray"/>
    <property type="resolution" value="2.70 A"/>
    <property type="chains" value="C=177-185"/>
</dbReference>
<dbReference type="PDB" id="6J2F">
    <property type="method" value="X-ray"/>
    <property type="resolution" value="1.90 A"/>
    <property type="chains" value="C/F=177-185"/>
</dbReference>
<dbReference type="PDB" id="7KI6">
    <property type="method" value="EM"/>
    <property type="resolution" value="2.80 A"/>
    <property type="chains" value="A/B/E=1-487"/>
</dbReference>
<dbReference type="PDB" id="8DNR">
    <property type="method" value="EM"/>
    <property type="resolution" value="2.80 A"/>
    <property type="chains" value="A/B/E=26-471"/>
</dbReference>
<dbReference type="PDBsum" id="1WP8"/>
<dbReference type="PDBsum" id="5EJB"/>
<dbReference type="PDBsum" id="6ILF"/>
<dbReference type="PDBsum" id="6J2F"/>
<dbReference type="PDBsum" id="7KI6"/>
<dbReference type="PDBsum" id="8DNR"/>
<dbReference type="EMDB" id="EMD-27577"/>
<dbReference type="SMR" id="O89342"/>
<dbReference type="IntAct" id="O89342">
    <property type="interactions" value="1"/>
</dbReference>
<dbReference type="GlyCosmos" id="O89342">
    <property type="glycosylation" value="5 sites, No reported glycans"/>
</dbReference>
<dbReference type="ABCD" id="O89342">
    <property type="antibodies" value="1 sequenced antibody"/>
</dbReference>
<dbReference type="KEGG" id="vg:1446467"/>
<dbReference type="EvolutionaryTrace" id="O89342"/>
<dbReference type="Proteomes" id="UP000008771">
    <property type="component" value="Segment"/>
</dbReference>
<dbReference type="GO" id="GO:0020002">
    <property type="term" value="C:host cell plasma membrane"/>
    <property type="evidence" value="ECO:0007669"/>
    <property type="project" value="UniProtKB-SubCell"/>
</dbReference>
<dbReference type="GO" id="GO:0044228">
    <property type="term" value="C:host cell surface"/>
    <property type="evidence" value="ECO:0000314"/>
    <property type="project" value="CACAO"/>
</dbReference>
<dbReference type="GO" id="GO:0016020">
    <property type="term" value="C:membrane"/>
    <property type="evidence" value="ECO:0007669"/>
    <property type="project" value="UniProtKB-KW"/>
</dbReference>
<dbReference type="GO" id="GO:0019031">
    <property type="term" value="C:viral envelope"/>
    <property type="evidence" value="ECO:0007669"/>
    <property type="project" value="UniProtKB-KW"/>
</dbReference>
<dbReference type="GO" id="GO:0055036">
    <property type="term" value="C:virion membrane"/>
    <property type="evidence" value="ECO:0007669"/>
    <property type="project" value="UniProtKB-SubCell"/>
</dbReference>
<dbReference type="GO" id="GO:0019064">
    <property type="term" value="P:fusion of virus membrane with host plasma membrane"/>
    <property type="evidence" value="ECO:0007669"/>
    <property type="project" value="UniProtKB-KW"/>
</dbReference>
<dbReference type="GO" id="GO:0046718">
    <property type="term" value="P:symbiont entry into host cell"/>
    <property type="evidence" value="ECO:0000269"/>
    <property type="project" value="SigSci"/>
</dbReference>
<dbReference type="Gene3D" id="1.10.287.2480">
    <property type="match status" value="1"/>
</dbReference>
<dbReference type="Gene3D" id="6.10.10.110">
    <property type="match status" value="1"/>
</dbReference>
<dbReference type="Gene3D" id="2.60.40.1690">
    <property type="entry name" value="Head and neck region of the ectodomain of NDV fusion glycoprotein"/>
    <property type="match status" value="1"/>
</dbReference>
<dbReference type="Gene3D" id="2.40.490.10">
    <property type="entry name" value="Newcastle disease virus like domain"/>
    <property type="match status" value="1"/>
</dbReference>
<dbReference type="Gene3D" id="1.10.287.770">
    <property type="entry name" value="YojJ-like"/>
    <property type="match status" value="1"/>
</dbReference>
<dbReference type="InterPro" id="IPR000776">
    <property type="entry name" value="Fusion_F0_Paramyxovir"/>
</dbReference>
<dbReference type="Pfam" id="PF00523">
    <property type="entry name" value="Fusion_gly"/>
    <property type="match status" value="1"/>
</dbReference>
<dbReference type="SUPFAM" id="SSF69922">
    <property type="entry name" value="Head and neck region of the ectodomain of NDV fusion glycoprotein"/>
    <property type="match status" value="1"/>
</dbReference>
<dbReference type="SUPFAM" id="SSF58069">
    <property type="entry name" value="Virus ectodomain"/>
    <property type="match status" value="1"/>
</dbReference>
<evidence type="ECO:0000250" key="1"/>
<evidence type="ECO:0000250" key="2">
    <source>
        <dbReference type="UniProtKB" id="Q786F3"/>
    </source>
</evidence>
<evidence type="ECO:0000250" key="3">
    <source>
        <dbReference type="UniProtKB" id="Q9IH63"/>
    </source>
</evidence>
<evidence type="ECO:0000255" key="4"/>
<evidence type="ECO:0000269" key="5">
    <source>
    </source>
</evidence>
<evidence type="ECO:0000305" key="6"/>
<evidence type="ECO:0007744" key="7">
    <source>
        <dbReference type="PDB" id="5EJB"/>
    </source>
</evidence>
<evidence type="ECO:0007829" key="8">
    <source>
        <dbReference type="PDB" id="1WP8"/>
    </source>
</evidence>
<evidence type="ECO:0007829" key="9">
    <source>
        <dbReference type="PDB" id="5EJB"/>
    </source>
</evidence>
<evidence type="ECO:0007829" key="10">
    <source>
        <dbReference type="PDB" id="7KI6"/>
    </source>
</evidence>
<keyword id="KW-0002">3D-structure</keyword>
<keyword id="KW-0175">Coiled coil</keyword>
<keyword id="KW-1015">Disulfide bond</keyword>
<keyword id="KW-1169">Fusion of virus membrane with host cell membrane</keyword>
<keyword id="KW-1168">Fusion of virus membrane with host membrane</keyword>
<keyword id="KW-0325">Glycoprotein</keyword>
<keyword id="KW-1032">Host cell membrane</keyword>
<keyword id="KW-1043">Host membrane</keyword>
<keyword id="KW-0472">Membrane</keyword>
<keyword id="KW-1185">Reference proteome</keyword>
<keyword id="KW-0732">Signal</keyword>
<keyword id="KW-0812">Transmembrane</keyword>
<keyword id="KW-1133">Transmembrane helix</keyword>
<keyword id="KW-0261">Viral envelope protein</keyword>
<keyword id="KW-1162">Viral penetration into host cytoplasm</keyword>
<keyword id="KW-0946">Virion</keyword>
<keyword id="KW-1160">Virus entry into host cell</keyword>
<organismHost>
    <name type="scientific">Equus caballus</name>
    <name type="common">Horse</name>
    <dbReference type="NCBI Taxonomy" id="9796"/>
</organismHost>
<organismHost>
    <name type="scientific">Homo sapiens</name>
    <name type="common">Human</name>
    <dbReference type="NCBI Taxonomy" id="9606"/>
</organismHost>
<organismHost>
    <name type="scientific">Pteropus alecto</name>
    <name type="common">Black flying fox</name>
    <dbReference type="NCBI Taxonomy" id="9402"/>
</organismHost>
<organismHost>
    <name type="scientific">Pteropus poliocephalus</name>
    <name type="common">Grey-headed flying fox</name>
    <dbReference type="NCBI Taxonomy" id="9403"/>
</organismHost>
<organismHost>
    <name type="scientific">Pteropus scapulatus</name>
    <name type="common">Little red flying fox</name>
    <dbReference type="NCBI Taxonomy" id="94117"/>
</organismHost>